<protein>
    <recommendedName>
        <fullName>Peripheral myelin protein 22</fullName>
        <shortName>PMP-22</shortName>
    </recommendedName>
</protein>
<keyword id="KW-0131">Cell cycle</keyword>
<keyword id="KW-1003">Cell membrane</keyword>
<keyword id="KW-0325">Glycoprotein</keyword>
<keyword id="KW-0338">Growth arrest</keyword>
<keyword id="KW-0472">Membrane</keyword>
<keyword id="KW-1185">Reference proteome</keyword>
<keyword id="KW-0812">Transmembrane</keyword>
<keyword id="KW-1133">Transmembrane helix</keyword>
<keyword id="KW-0832">Ubl conjugation</keyword>
<name>PMP22_HORSE</name>
<dbReference type="EMBL" id="AY280708">
    <property type="protein sequence ID" value="AAQ17534.1"/>
    <property type="molecule type" value="mRNA"/>
</dbReference>
<dbReference type="RefSeq" id="NP_001075405.1">
    <property type="nucleotide sequence ID" value="NM_001081936.1"/>
</dbReference>
<dbReference type="RefSeq" id="XP_005597077.1">
    <property type="nucleotide sequence ID" value="XM_005597020.3"/>
</dbReference>
<dbReference type="RefSeq" id="XP_005597078.1">
    <property type="nucleotide sequence ID" value="XM_005597021.4"/>
</dbReference>
<dbReference type="SMR" id="Q6WL85"/>
<dbReference type="FunCoup" id="Q6WL85">
    <property type="interactions" value="89"/>
</dbReference>
<dbReference type="STRING" id="9796.ENSECAP00000022747"/>
<dbReference type="GlyCosmos" id="Q6WL85">
    <property type="glycosylation" value="1 site, No reported glycans"/>
</dbReference>
<dbReference type="PaxDb" id="9796-ENSECAP00000022747"/>
<dbReference type="Ensembl" id="ENSECAT00000112382.1">
    <property type="protein sequence ID" value="ENSECAP00000084676.1"/>
    <property type="gene ID" value="ENSECAG00000025178.4"/>
</dbReference>
<dbReference type="GeneID" id="100034146"/>
<dbReference type="KEGG" id="ecb:100034146"/>
<dbReference type="CTD" id="5376"/>
<dbReference type="VGNC" id="VGNC:21615">
    <property type="gene designation" value="PMP22"/>
</dbReference>
<dbReference type="GeneTree" id="ENSGT00950000182696"/>
<dbReference type="HOGENOM" id="CLU_138632_1_0_1"/>
<dbReference type="InParanoid" id="Q6WL85"/>
<dbReference type="OMA" id="HTADLWQ"/>
<dbReference type="OrthoDB" id="6084046at2759"/>
<dbReference type="TreeFam" id="TF330414"/>
<dbReference type="Proteomes" id="UP000002281">
    <property type="component" value="Chromosome 11"/>
</dbReference>
<dbReference type="Bgee" id="ENSECAG00000025178">
    <property type="expression patterns" value="Expressed in articular cartilage of joint and 23 other cell types or tissues"/>
</dbReference>
<dbReference type="ExpressionAtlas" id="Q6WL85">
    <property type="expression patterns" value="baseline"/>
</dbReference>
<dbReference type="GO" id="GO:0005886">
    <property type="term" value="C:plasma membrane"/>
    <property type="evidence" value="ECO:0000318"/>
    <property type="project" value="GO_Central"/>
</dbReference>
<dbReference type="GO" id="GO:0006915">
    <property type="term" value="P:apoptotic process"/>
    <property type="evidence" value="ECO:0007669"/>
    <property type="project" value="Ensembl"/>
</dbReference>
<dbReference type="GO" id="GO:0032060">
    <property type="term" value="P:bleb assembly"/>
    <property type="evidence" value="ECO:0007669"/>
    <property type="project" value="Ensembl"/>
</dbReference>
<dbReference type="GO" id="GO:0032288">
    <property type="term" value="P:myelin assembly"/>
    <property type="evidence" value="ECO:0000318"/>
    <property type="project" value="GO_Central"/>
</dbReference>
<dbReference type="GO" id="GO:0051726">
    <property type="term" value="P:regulation of cell cycle"/>
    <property type="evidence" value="ECO:0007669"/>
    <property type="project" value="UniProtKB-KW"/>
</dbReference>
<dbReference type="FunFam" id="1.20.140.150:FF:000019">
    <property type="entry name" value="Peripheral myelin protein 22"/>
    <property type="match status" value="1"/>
</dbReference>
<dbReference type="Gene3D" id="1.20.140.150">
    <property type="match status" value="1"/>
</dbReference>
<dbReference type="InterPro" id="IPR050579">
    <property type="entry name" value="PMP-22/EMP/MP20-like"/>
</dbReference>
<dbReference type="InterPro" id="IPR003936">
    <property type="entry name" value="PMP22"/>
</dbReference>
<dbReference type="InterPro" id="IPR004031">
    <property type="entry name" value="PMP22/EMP/MP20/Claudin"/>
</dbReference>
<dbReference type="InterPro" id="IPR004032">
    <property type="entry name" value="PMP22_EMP_MP20"/>
</dbReference>
<dbReference type="PANTHER" id="PTHR10671">
    <property type="entry name" value="EPITHELIAL MEMBRANE PROTEIN-RELATED"/>
    <property type="match status" value="1"/>
</dbReference>
<dbReference type="PANTHER" id="PTHR10671:SF7">
    <property type="entry name" value="PERIPHERAL MYELIN PROTEIN 22"/>
    <property type="match status" value="1"/>
</dbReference>
<dbReference type="Pfam" id="PF00822">
    <property type="entry name" value="PMP22_Claudin"/>
    <property type="match status" value="1"/>
</dbReference>
<dbReference type="PRINTS" id="PR01453">
    <property type="entry name" value="EPMEMFAMILY"/>
</dbReference>
<dbReference type="PRINTS" id="PR01458">
    <property type="entry name" value="PMYELIN22"/>
</dbReference>
<dbReference type="PROSITE" id="PS01221">
    <property type="entry name" value="PMP22_1"/>
    <property type="match status" value="1"/>
</dbReference>
<dbReference type="PROSITE" id="PS01222">
    <property type="entry name" value="PMP22_2"/>
    <property type="match status" value="1"/>
</dbReference>
<gene>
    <name type="primary">PMP22</name>
</gene>
<reference key="1">
    <citation type="submission" date="2003-04" db="EMBL/GenBank/DDBJ databases">
        <title>Characterization of the equine MPZ, PMP22 and GJB1 genes and their evaluation as candidate genes for equine idiopathic laryngeal hemiplegia.</title>
        <authorList>
            <person name="Blechynden L.M."/>
            <person name="Akkari P.A."/>
            <person name="Hilbert B.J."/>
            <person name="Laing N.G."/>
        </authorList>
    </citation>
    <scope>NUCLEOTIDE SEQUENCE [MRNA]</scope>
</reference>
<comment type="function">
    <text evidence="1">Might be involved in growth regulation, and in myelinization in the peripheral nervous system.</text>
</comment>
<comment type="subcellular location">
    <subcellularLocation>
        <location evidence="1">Cell membrane</location>
        <topology evidence="1">Multi-pass membrane protein</topology>
    </subcellularLocation>
</comment>
<comment type="PTM">
    <text evidence="2">Ubiquitinated by the DCX(DCAF13) E3 ubiquitin ligase complex, leading to its degradation.</text>
</comment>
<comment type="similarity">
    <text evidence="4">Belongs to the PMP-22/EMP/MP20 family.</text>
</comment>
<organism>
    <name type="scientific">Equus caballus</name>
    <name type="common">Horse</name>
    <dbReference type="NCBI Taxonomy" id="9796"/>
    <lineage>
        <taxon>Eukaryota</taxon>
        <taxon>Metazoa</taxon>
        <taxon>Chordata</taxon>
        <taxon>Craniata</taxon>
        <taxon>Vertebrata</taxon>
        <taxon>Euteleostomi</taxon>
        <taxon>Mammalia</taxon>
        <taxon>Eutheria</taxon>
        <taxon>Laurasiatheria</taxon>
        <taxon>Perissodactyla</taxon>
        <taxon>Equidae</taxon>
        <taxon>Equus</taxon>
    </lineage>
</organism>
<sequence>MLLLLLGIIVLHVAVLVLLFVATIVSQWIVGNGHATDLWQNCSTTSGNVQHCLSSSANEWLQSVQATMILSIIFSVLSLFLFFCQLFTLTKGGRFYITGIFQILAGLCVMSAASIYTVRHPEWHLDSAYSYGFAYILAWVAFPLALLSGVVYVILRKRE</sequence>
<proteinExistence type="evidence at transcript level"/>
<evidence type="ECO:0000250" key="1"/>
<evidence type="ECO:0000250" key="2">
    <source>
        <dbReference type="UniProtKB" id="P16646"/>
    </source>
</evidence>
<evidence type="ECO:0000255" key="3"/>
<evidence type="ECO:0000305" key="4"/>
<accession>Q6WL85</accession>
<feature type="chain" id="PRO_0000164649" description="Peripheral myelin protein 22">
    <location>
        <begin position="1"/>
        <end position="159"/>
    </location>
</feature>
<feature type="topological domain" description="Cytoplasmic" evidence="3">
    <location>
        <position position="1"/>
    </location>
</feature>
<feature type="transmembrane region" description="Helical" evidence="1">
    <location>
        <begin position="2"/>
        <end position="31"/>
    </location>
</feature>
<feature type="topological domain" description="Extracellular" evidence="3">
    <location>
        <begin position="32"/>
        <end position="64"/>
    </location>
</feature>
<feature type="transmembrane region" description="Helical" evidence="1">
    <location>
        <begin position="65"/>
        <end position="91"/>
    </location>
</feature>
<feature type="topological domain" description="Cytoplasmic" evidence="3">
    <location>
        <begin position="92"/>
        <end position="95"/>
    </location>
</feature>
<feature type="transmembrane region" description="Helical" evidence="1">
    <location>
        <begin position="96"/>
        <end position="119"/>
    </location>
</feature>
<feature type="topological domain" description="Extracellular" evidence="3">
    <location>
        <begin position="120"/>
        <end position="133"/>
    </location>
</feature>
<feature type="transmembrane region" description="Helical" evidence="1">
    <location>
        <begin position="134"/>
        <end position="156"/>
    </location>
</feature>
<feature type="topological domain" description="Cytoplasmic" evidence="3">
    <location>
        <begin position="157"/>
        <end position="159"/>
    </location>
</feature>
<feature type="glycosylation site" description="N-linked (GlcNAc...) asparagine" evidence="3">
    <location>
        <position position="41"/>
    </location>
</feature>